<keyword id="KW-0002">3D-structure</keyword>
<keyword id="KW-1003">Cell membrane</keyword>
<keyword id="KW-0966">Cell projection</keyword>
<keyword id="KW-0140">cGMP</keyword>
<keyword id="KW-0142">cGMP-binding</keyword>
<keyword id="KW-0145">Chemotaxis</keyword>
<keyword id="KW-0407">Ion channel</keyword>
<keyword id="KW-0406">Ion transport</keyword>
<keyword id="KW-1071">Ligand-gated ion channel</keyword>
<keyword id="KW-0472">Membrane</keyword>
<keyword id="KW-0524">Neurogenesis</keyword>
<keyword id="KW-0547">Nucleotide-binding</keyword>
<keyword id="KW-1185">Reference proteome</keyword>
<keyword id="KW-0812">Transmembrane</keyword>
<keyword id="KW-1133">Transmembrane helix</keyword>
<keyword id="KW-0813">Transport</keyword>
<evidence type="ECO:0000250" key="1">
    <source>
        <dbReference type="UniProtKB" id="P29973"/>
    </source>
</evidence>
<evidence type="ECO:0000250" key="2">
    <source>
        <dbReference type="UniProtKB" id="Q16281"/>
    </source>
</evidence>
<evidence type="ECO:0000255" key="3"/>
<evidence type="ECO:0000256" key="4">
    <source>
        <dbReference type="SAM" id="MobiDB-lite"/>
    </source>
</evidence>
<evidence type="ECO:0000269" key="5">
    <source>
    </source>
</evidence>
<evidence type="ECO:0000269" key="6">
    <source>
    </source>
</evidence>
<evidence type="ECO:0000269" key="7">
    <source>
    </source>
</evidence>
<evidence type="ECO:0000269" key="8">
    <source>
    </source>
</evidence>
<evidence type="ECO:0000269" key="9">
    <source>
    </source>
</evidence>
<evidence type="ECO:0000269" key="10">
    <source>
    </source>
</evidence>
<evidence type="ECO:0000269" key="11">
    <source>
    </source>
</evidence>
<evidence type="ECO:0000269" key="12">
    <source>
    </source>
</evidence>
<evidence type="ECO:0000269" key="13">
    <source>
    </source>
</evidence>
<evidence type="ECO:0000269" key="14">
    <source>
    </source>
</evidence>
<evidence type="ECO:0000269" key="15">
    <source>
    </source>
</evidence>
<evidence type="ECO:0000269" key="16">
    <source>
    </source>
</evidence>
<evidence type="ECO:0000305" key="17"/>
<evidence type="ECO:0000305" key="18">
    <source>
    </source>
</evidence>
<evidence type="ECO:0000305" key="19">
    <source>
    </source>
</evidence>
<evidence type="ECO:0007744" key="20">
    <source>
        <dbReference type="PDB" id="5H3O"/>
    </source>
</evidence>
<evidence type="ECO:0007744" key="21">
    <source>
        <dbReference type="PDB" id="6WEJ"/>
    </source>
</evidence>
<evidence type="ECO:0007744" key="22">
    <source>
        <dbReference type="PDB" id="6WEK"/>
    </source>
</evidence>
<evidence type="ECO:0007744" key="23">
    <source>
        <dbReference type="PDB" id="6WEL"/>
    </source>
</evidence>
<evidence type="ECO:0007744" key="24">
    <source>
        <dbReference type="PDB" id="7N15"/>
    </source>
</evidence>
<evidence type="ECO:0007744" key="25">
    <source>
        <dbReference type="PDB" id="7N16"/>
    </source>
</evidence>
<evidence type="ECO:0007744" key="26">
    <source>
        <dbReference type="PDB" id="7N17"/>
    </source>
</evidence>
<evidence type="ECO:0007829" key="27">
    <source>
        <dbReference type="PDB" id="5H3O"/>
    </source>
</evidence>
<evidence type="ECO:0007829" key="28">
    <source>
        <dbReference type="PDB" id="6WEK"/>
    </source>
</evidence>
<evidence type="ECO:0007829" key="29">
    <source>
        <dbReference type="PDB" id="6WEL"/>
    </source>
</evidence>
<evidence type="ECO:0007829" key="30">
    <source>
        <dbReference type="PDB" id="7N15"/>
    </source>
</evidence>
<comment type="function">
    <text evidence="1 2 5 6 7 8 9 10 11 13 14 15 16">Pore-forming subunit of the cyclic nucleotide-gated channel (By similarity). Required for normal thermosensation and chemosensation sensory behavior (PubMed:8893027). Required, downstream of receptor-type guanylate cyclase gcy-9, for CO2-mediated responses in BAG neurons (PubMed:21173231). Required, downstream of receptor-type guanylate cyclase gcy-14, for alkaline pH-mediated responses in ASE-left (ASEL) neurons (PubMed:23664973). Involved in the development of ASJ sensory neuron axon during late larval stages and in the maintenance of normal axon morphology in the adult. Regulates dauer formation (PubMed:9486798). Required for the calcium flux to the cytoplasm in the ASJ sensory neurons upon the onset and removal of a nitric oxide (NO) stimulus, thereby promoting the ASJ-mediated behavioral avoidance response to NO-producing organisms like P.aeruginosa (PubMed:30014846). In ASI and ASJ sensory neurons, controls behavioral response to P.aeruginosa by up-regulating the transcription of daf-7, a member of the TGF-beta family (PubMed:25303524). In AWB and AWC sensory neurons, mediates the recognition of food odors which subsequently allows for the detection of preferred food sources (PubMed:25009271). In AWC neurons, acts to promote expression of srsx-3, a member of the GPCR family. Binding to cGMP results in conformational changes at the hydrophobic gate that converts the protein from an inactive closed state to an active open state (PubMed:28099415, PubMed:32483338, PubMed:35233102).</text>
</comment>
<comment type="catalytic activity">
    <reaction evidence="14">
        <text>Ca(2+)(in) = Ca(2+)(out)</text>
        <dbReference type="Rhea" id="RHEA:29671"/>
        <dbReference type="ChEBI" id="CHEBI:29108"/>
    </reaction>
</comment>
<comment type="catalytic activity">
    <reaction evidence="2">
        <text>Na(+)(in) = Na(+)(out)</text>
        <dbReference type="Rhea" id="RHEA:34963"/>
        <dbReference type="ChEBI" id="CHEBI:29101"/>
    </reaction>
</comment>
<comment type="catalytic activity">
    <reaction evidence="2">
        <text>K(+)(in) = K(+)(out)</text>
        <dbReference type="Rhea" id="RHEA:29463"/>
        <dbReference type="ChEBI" id="CHEBI:29103"/>
    </reaction>
</comment>
<comment type="subunit">
    <text evidence="10 13 14">Homotetramer.</text>
</comment>
<comment type="interaction">
    <interactant intactId="EBI-20710167">
        <id>Q03611</id>
    </interactant>
    <interactant intactId="EBI-20710167">
        <id>Q03611</id>
        <label>tax-4</label>
    </interactant>
    <organismsDiffer>false</organismsDiffer>
    <experiments>3</experiments>
</comment>
<comment type="subcellular location">
    <subcellularLocation>
        <location evidence="10">Cell membrane</location>
        <topology evidence="10">Multi-pass membrane protein</topology>
    </subcellularLocation>
    <subcellularLocation>
        <location evidence="12">Cell projection</location>
        <location evidence="12">Cilium</location>
    </subcellularLocation>
</comment>
<comment type="tissue specificity">
    <text evidence="12 15">Expressed at the sensory endings of thermosensory, gustatory, and olfactory neurons.</text>
</comment>
<comment type="similarity">
    <text evidence="17">Belongs to the cyclic nucleotide-gated cation channel (TC 1.A.1.5) family.</text>
</comment>
<name>CNG_CAEEL</name>
<sequence length="733" mass="83893">MSTAEPAPDPTNPSTSGLAPTTNGIGSPPPTASAATKFSILTKFLRRKNQVHTTTAQQNEFMQKYMPNGNSNAVQPAATGGQPASSDGGSAIEVPPPKESYAVRIRKYLANYTQDPSTDNFYYWTCVVTVAYIYNLLFVIARQVFNDLIGPSSQSLCRFYNGTLNSTTQVECTYNMLTNMKEMPTYSQYPDLGWSKYWHFRMLWVFFDLLMDCVYLIDTFLNYRMGYMDQGLVVREAEKVTKAYWQSKQYRIDGISLIPLDYILGWPIPYINWRGLPILRLNRLIRYKRVRNCLERTETRSSMPNAFRVVVVVWYIVIIIHWNACLYFWISEWIGLGTDAWVYGHLNKQSLPDDITDTLLRRYVYSFYWSTLILTTIGEVPSPVRNIEYAFVTLDLMCGVLIFATIVGNVGSMISNMSAARTEFQNKMDGIKQYMELRKVSKQLEIRVIKWFDYLWTNKQSLSDQQVLKVLPDKLQAEIAMQVHFETLRKVRIFQDCEAGLLAELVLKLQLQVFSPGDFICKKGDIGREMYIVKRGRLQVVDDDGKKVFVTLQEGSVFGELSILNIAGSKNGNRRTANVRSVGYTDLFVLSKTDLWNALREYPDARKLLLAKGREILKKDNLLDENAPEEQKTVEEIAEHLNNAVKVLQTRMARLIVEHSSTEGKLMKRIEMLEKHLSRYKALARRQKTMHGVSIDGGDISTDGVDERVRPPRLRQTKTIDLPTGTESESLLK</sequence>
<reference key="1">
    <citation type="journal article" date="1996" name="Neuron">
        <title>Mutations in a cyclic nucleotide-gated channel lead to abnormal thermosensation and chemosensation in C. elegans.</title>
        <authorList>
            <person name="Komatsu H."/>
            <person name="Mori I."/>
            <person name="Rhee J.S."/>
            <person name="Akaike N."/>
            <person name="Ohshima Y."/>
        </authorList>
    </citation>
    <scope>NUCLEOTIDE SEQUENCE [MRNA]</scope>
    <scope>FUNCTION</scope>
    <scope>TISSUE SPECIFICITY</scope>
</reference>
<reference key="2">
    <citation type="journal article" date="1994" name="Nature">
        <title>2.2 Mb of contiguous nucleotide sequence from chromosome III of C. elegans.</title>
        <authorList>
            <person name="Wilson R."/>
            <person name="Ainscough R."/>
            <person name="Anderson K."/>
            <person name="Baynes C."/>
            <person name="Berks M."/>
            <person name="Bonfield J."/>
            <person name="Burton J."/>
            <person name="Connell M."/>
            <person name="Copsey T."/>
            <person name="Cooper J."/>
            <person name="Coulson A."/>
            <person name="Craxton M."/>
            <person name="Dear S."/>
            <person name="Du Z."/>
            <person name="Durbin R."/>
            <person name="Favello A."/>
            <person name="Fraser A."/>
            <person name="Fulton L."/>
            <person name="Gardner A."/>
            <person name="Green P."/>
            <person name="Hawkins T."/>
            <person name="Hillier L."/>
            <person name="Jier M."/>
            <person name="Johnston L."/>
            <person name="Jones M."/>
            <person name="Kershaw J."/>
            <person name="Kirsten J."/>
            <person name="Laisster N."/>
            <person name="Latreille P."/>
            <person name="Lightning J."/>
            <person name="Lloyd C."/>
            <person name="Mortimore B."/>
            <person name="O'Callaghan M."/>
            <person name="Parsons J."/>
            <person name="Percy C."/>
            <person name="Rifken L."/>
            <person name="Roopra A."/>
            <person name="Saunders D."/>
            <person name="Shownkeen R."/>
            <person name="Sims M."/>
            <person name="Smaldon N."/>
            <person name="Smith A."/>
            <person name="Smith M."/>
            <person name="Sonnhammer E."/>
            <person name="Staden R."/>
            <person name="Sulston J."/>
            <person name="Thierry-Mieg J."/>
            <person name="Thomas K."/>
            <person name="Vaudin M."/>
            <person name="Vaughan K."/>
            <person name="Waterston R."/>
            <person name="Watson A."/>
            <person name="Weinstock L."/>
            <person name="Wilkinson-Sproat J."/>
            <person name="Wohldman P."/>
        </authorList>
    </citation>
    <scope>NUCLEOTIDE SEQUENCE [LARGE SCALE GENOMIC DNA]</scope>
    <source>
        <strain>Bristol N2</strain>
    </source>
</reference>
<reference key="3">
    <citation type="journal article" date="1998" name="Science">
        <title>Genome sequence of the nematode C. elegans: a platform for investigating biology.</title>
        <authorList>
            <consortium name="The C. elegans sequencing consortium"/>
        </authorList>
    </citation>
    <scope>NUCLEOTIDE SEQUENCE [LARGE SCALE GENOMIC DNA]</scope>
    <source>
        <strain>Bristol N2</strain>
    </source>
</reference>
<reference key="4">
    <citation type="journal article" date="1998" name="Development">
        <title>A cyclic nucleotide-gated channel inhibits sensory axon outgrowth in larval and adult Caenorhabditis elegans: a distinct pathway for maintenance of sensory axon structure.</title>
        <authorList>
            <person name="Coburn C.M."/>
            <person name="Mori I."/>
            <person name="Ohshima Y."/>
            <person name="Bargmann C.I."/>
        </authorList>
    </citation>
    <scope>FUNCTION</scope>
</reference>
<reference key="5">
    <citation type="journal article" date="2010" name="Genes Dev.">
        <title>The homeodomain protein hmbx-1 maintains asymmetric gene expression in adult C. elegans olfactory neurons.</title>
        <authorList>
            <person name="Lesch B.J."/>
            <person name="Bargmann C.I."/>
        </authorList>
    </citation>
    <scope>FUNCTION</scope>
    <scope>MUTAGENESIS OF 510-GLN--LYS-733</scope>
</reference>
<reference key="6">
    <citation type="journal article" date="2011" name="Proc. Natl. Acad. Sci. U.S.A.">
        <title>Receptor-type guanylate cyclase is required for carbon dioxide sensation by Caenorhabditis elegans.</title>
        <authorList>
            <person name="Hallem E.A."/>
            <person name="Spencer W.C."/>
            <person name="McWhirter R.D."/>
            <person name="Zeller G."/>
            <person name="Henz S.R."/>
            <person name="Ratsch G."/>
            <person name="Miller D.M."/>
            <person name="Horvitz H.R."/>
            <person name="Sternberg P.W."/>
            <person name="Ringstad N."/>
        </authorList>
    </citation>
    <scope>FUNCTION</scope>
</reference>
<reference key="7">
    <citation type="journal article" date="2013" name="Curr. Biol.">
        <title>Environmental alkalinity sensing mediated by the transmembrane guanylyl cyclase GCY-14 in C. elegans.</title>
        <authorList>
            <person name="Murayama T."/>
            <person name="Takayama J."/>
            <person name="Fujiwara M."/>
            <person name="Maruyama I.N."/>
        </authorList>
    </citation>
    <scope>FUNCTION</scope>
</reference>
<reference key="8">
    <citation type="journal article" date="2014" name="Cell">
        <title>Chemosensation of bacterial secondary metabolites modulates neuroendocrine signaling and behavior of C. elegans.</title>
        <authorList>
            <person name="Meisel J.D."/>
            <person name="Panda O."/>
            <person name="Mahanti P."/>
            <person name="Schroeder F.C."/>
            <person name="Kim D.H."/>
        </authorList>
    </citation>
    <scope>FUNCTION</scope>
</reference>
<reference key="9">
    <citation type="journal article" date="2014" name="J. Neurosci.">
        <title>Dissecting the signaling mechanisms underlying recognition and preference of food odors.</title>
        <authorList>
            <person name="Harris G."/>
            <person name="Shen Y."/>
            <person name="Ha H."/>
            <person name="Donato A."/>
            <person name="Wallis S."/>
            <person name="Zhang X."/>
            <person name="Zhang Y."/>
        </authorList>
    </citation>
    <scope>FUNCTION</scope>
</reference>
<reference key="10">
    <citation type="journal article" date="2018" name="Elife">
        <title>Thioredoxin shapes the C. elegans sensory response to Pseudomonas produced nitric oxide.</title>
        <authorList>
            <person name="Hao Y."/>
            <person name="Yang W."/>
            <person name="Ren J."/>
            <person name="Hall Q."/>
            <person name="Zhang Y."/>
            <person name="Kaplan J.M."/>
        </authorList>
    </citation>
    <scope>FUNCTION</scope>
    <scope>MUTAGENESIS OF 82-GLU--LYS-733</scope>
</reference>
<reference key="11">
    <citation type="journal article" date="2019" name="Elife">
        <title>The Caenorhabditis elegans Tubby homolog dynamically modulates olfactory cilia membrane morphogenesis and phospholipid composition.</title>
        <authorList>
            <person name="DiTirro D."/>
            <person name="Philbrook A."/>
            <person name="Rubino K."/>
            <person name="Sengupta P."/>
        </authorList>
    </citation>
    <scope>SUBCELLULAR LOCATION</scope>
    <scope>TISSUE SPECIFICITY</scope>
</reference>
<reference evidence="20" key="12">
    <citation type="journal article" date="2017" name="Nature">
        <title>Structure of a eukaryotic cyclic-nucleotide-gated channel.</title>
        <authorList>
            <person name="Li M."/>
            <person name="Zhou X."/>
            <person name="Wang S."/>
            <person name="Michailidis I."/>
            <person name="Gong Y."/>
            <person name="Su D."/>
            <person name="Li H."/>
            <person name="Li X."/>
            <person name="Yang J."/>
        </authorList>
    </citation>
    <scope>STRUCTURE BY ELECTRON MICROSCOPY (3.50 ANGSTROMS) OF 106-620 IN COMPLEX WITH SODIUM AND 3',5'-CYCLIC GMP</scope>
    <scope>FUNCTION</scope>
    <scope>CATALYTIC ACTIVITY</scope>
    <scope>SUBUNIT</scope>
    <scope>SUBCELLULAR LOCATION</scope>
    <scope>MUTAGENESIS OF MET-417; ARG-421; GLN-425; ASP-429; LYS-432 AND ASP-453</scope>
</reference>
<reference evidence="21 22 23" key="13">
    <citation type="journal article" date="2020" name="Nat. Struct. Mol. Biol.">
        <title>Mechanism of ligand activation of a eukaryotic cyclic nucleotide-gated channel.</title>
        <authorList>
            <person name="Zheng X."/>
            <person name="Fu Z."/>
            <person name="Su D."/>
            <person name="Zhang Y."/>
            <person name="Li M."/>
            <person name="Pan Y."/>
            <person name="Li H."/>
            <person name="Li S."/>
            <person name="Grassucci R.A."/>
            <person name="Ren Z."/>
            <person name="Hu Z."/>
            <person name="Li X."/>
            <person name="Zhou M."/>
            <person name="Li G."/>
            <person name="Frank J."/>
            <person name="Yang J."/>
        </authorList>
    </citation>
    <scope>STRUCTURE BY ELECTRON MICROSCOPY (2.50 ANGSTROMS) OF 103-620 OF 3',5'-CYCLIC GMP-BOUND AND 3',5'-CYCLIC GMP-UNBOUND FORMS IN COMPLEX WITH SODIUM</scope>
    <scope>FUNCTION</scope>
    <scope>CATALYTIC ACTIVITY</scope>
    <scope>SUBUNIT</scope>
    <scope>TOPOLOGY</scope>
    <scope>MUTAGENESIS OF PHE-403 AND VAL-407</scope>
</reference>
<reference evidence="24 25 26" key="14">
    <citation type="journal article" date="2022" name="Commun. Biol.">
        <title>Structural and functional characterization of an achromatopsia-associated mutation in a phototransduction channel.</title>
        <authorList>
            <person name="Zheng X."/>
            <person name="Li H."/>
            <person name="Hu Z."/>
            <person name="Su D."/>
            <person name="Yang J."/>
        </authorList>
    </citation>
    <scope>STRUCTURE BY ELECTRON MICROSCOPY (2.90 ANGSTROMS) OF 101-620 OF MUTANT TRP-421 OF 3',5'-CYCLIC GMP-BOUND AND 3',5'-CYCLIC GMP-UNBOUND FORMS IN COMPLEX WITH SODIUM</scope>
    <scope>FUNCTION</scope>
    <scope>CATALYTIC ACTIVITY</scope>
    <scope>SUBUNIT</scope>
    <scope>MUTAGENESIS OF ARG-421</scope>
</reference>
<dbReference type="EMBL" id="D86922">
    <property type="protein sequence ID" value="BAA13180.1"/>
    <property type="molecule type" value="mRNA"/>
</dbReference>
<dbReference type="EMBL" id="Z19157">
    <property type="protein sequence ID" value="CAB63418.2"/>
    <property type="molecule type" value="Genomic_DNA"/>
</dbReference>
<dbReference type="PIR" id="S28292">
    <property type="entry name" value="S28292"/>
</dbReference>
<dbReference type="RefSeq" id="NP_499033.1">
    <property type="nucleotide sequence ID" value="NM_066632.6"/>
</dbReference>
<dbReference type="PDB" id="5H3O">
    <property type="method" value="EM"/>
    <property type="resolution" value="3.50 A"/>
    <property type="chains" value="A/B/C/D=1-733"/>
</dbReference>
<dbReference type="PDB" id="6WEJ">
    <property type="method" value="EM"/>
    <property type="resolution" value="2.60 A"/>
    <property type="chains" value="A/B/C/D=1-733"/>
</dbReference>
<dbReference type="PDB" id="6WEK">
    <property type="method" value="EM"/>
    <property type="resolution" value="2.70 A"/>
    <property type="chains" value="A/B/C/D=1-733"/>
</dbReference>
<dbReference type="PDB" id="6WEL">
    <property type="method" value="EM"/>
    <property type="resolution" value="2.50 A"/>
    <property type="chains" value="A/B/C/D=1-733"/>
</dbReference>
<dbReference type="PDB" id="7N15">
    <property type="method" value="EM"/>
    <property type="resolution" value="2.90 A"/>
    <property type="chains" value="A/B/C/D=1-733"/>
</dbReference>
<dbReference type="PDB" id="7N16">
    <property type="method" value="EM"/>
    <property type="resolution" value="3.20 A"/>
    <property type="chains" value="A/B/C/D=1-733"/>
</dbReference>
<dbReference type="PDB" id="7N17">
    <property type="method" value="EM"/>
    <property type="resolution" value="3.10 A"/>
    <property type="chains" value="A/B/C/D=1-733"/>
</dbReference>
<dbReference type="PDBsum" id="5H3O"/>
<dbReference type="PDBsum" id="6WEJ"/>
<dbReference type="PDBsum" id="6WEK"/>
<dbReference type="PDBsum" id="6WEL"/>
<dbReference type="PDBsum" id="7N15"/>
<dbReference type="PDBsum" id="7N16"/>
<dbReference type="PDBsum" id="7N17"/>
<dbReference type="EMDB" id="EMD-21649"/>
<dbReference type="EMDB" id="EMD-21650"/>
<dbReference type="EMDB" id="EMD-21651"/>
<dbReference type="EMDB" id="EMD-24113"/>
<dbReference type="EMDB" id="EMD-24114"/>
<dbReference type="EMDB" id="EMD-24115"/>
<dbReference type="EMDB" id="EMD-6656"/>
<dbReference type="SMR" id="Q03611"/>
<dbReference type="BioGRID" id="41496">
    <property type="interactions" value="3"/>
</dbReference>
<dbReference type="FunCoup" id="Q03611">
    <property type="interactions" value="40"/>
</dbReference>
<dbReference type="STRING" id="6239.ZC84.2.1"/>
<dbReference type="TCDB" id="1.A.1.5.20">
    <property type="family name" value="the voltage-gated ion channel (vic) superfamily"/>
</dbReference>
<dbReference type="PaxDb" id="6239-ZC84.2"/>
<dbReference type="EnsemblMetazoa" id="ZC84.2.1">
    <property type="protein sequence ID" value="ZC84.2.1"/>
    <property type="gene ID" value="WBGene00006526"/>
</dbReference>
<dbReference type="GeneID" id="176297"/>
<dbReference type="KEGG" id="cel:CELE_ZC84.2"/>
<dbReference type="UCSC" id="ZC84.2">
    <property type="organism name" value="c. elegans"/>
</dbReference>
<dbReference type="AGR" id="WB:WBGene00006526"/>
<dbReference type="CTD" id="176297"/>
<dbReference type="WormBase" id="ZC84.2">
    <property type="protein sequence ID" value="CE27352"/>
    <property type="gene ID" value="WBGene00006526"/>
    <property type="gene designation" value="tax-4"/>
</dbReference>
<dbReference type="eggNOG" id="KOG0500">
    <property type="taxonomic scope" value="Eukaryota"/>
</dbReference>
<dbReference type="GeneTree" id="ENSGT00940000171789"/>
<dbReference type="HOGENOM" id="CLU_005746_12_1_1"/>
<dbReference type="InParanoid" id="Q03611"/>
<dbReference type="OMA" id="ELQMDHI"/>
<dbReference type="OrthoDB" id="421226at2759"/>
<dbReference type="PhylomeDB" id="Q03611"/>
<dbReference type="Reactome" id="R-CEL-2485179">
    <property type="pathway name" value="Activation of the phototransduction cascade"/>
</dbReference>
<dbReference type="Reactome" id="R-CEL-2514859">
    <property type="pathway name" value="Inactivation, recovery and regulation of the phototransduction cascade"/>
</dbReference>
<dbReference type="Reactome" id="R-CEL-5620916">
    <property type="pathway name" value="VxPx cargo-targeting to cilium"/>
</dbReference>
<dbReference type="PRO" id="PR:Q03611"/>
<dbReference type="Proteomes" id="UP000001940">
    <property type="component" value="Chromosome III"/>
</dbReference>
<dbReference type="Bgee" id="WBGene00006526">
    <property type="expression patterns" value="Expressed in pharyngeal muscle cell (C elegans) and 2 other cell types or tissues"/>
</dbReference>
<dbReference type="GO" id="GO:0034703">
    <property type="term" value="C:cation channel complex"/>
    <property type="evidence" value="ECO:0000314"/>
    <property type="project" value="WormBase"/>
</dbReference>
<dbReference type="GO" id="GO:0097543">
    <property type="term" value="C:ciliary inversin compartment"/>
    <property type="evidence" value="ECO:0000314"/>
    <property type="project" value="WormBase"/>
</dbReference>
<dbReference type="GO" id="GO:0030425">
    <property type="term" value="C:dendrite"/>
    <property type="evidence" value="ECO:0000314"/>
    <property type="project" value="WormBase"/>
</dbReference>
<dbReference type="GO" id="GO:0017071">
    <property type="term" value="C:intracellular cyclic nucleotide activated cation channel complex"/>
    <property type="evidence" value="ECO:0000318"/>
    <property type="project" value="GO_Central"/>
</dbReference>
<dbReference type="GO" id="GO:0016020">
    <property type="term" value="C:membrane"/>
    <property type="evidence" value="ECO:0000303"/>
    <property type="project" value="UniProtKB"/>
</dbReference>
<dbReference type="GO" id="GO:0097730">
    <property type="term" value="C:non-motile cilium"/>
    <property type="evidence" value="ECO:0000314"/>
    <property type="project" value="UniProtKB"/>
</dbReference>
<dbReference type="GO" id="GO:0005886">
    <property type="term" value="C:plasma membrane"/>
    <property type="evidence" value="ECO:0000318"/>
    <property type="project" value="GO_Central"/>
</dbReference>
<dbReference type="GO" id="GO:0030553">
    <property type="term" value="F:cGMP binding"/>
    <property type="evidence" value="ECO:0000318"/>
    <property type="project" value="GO_Central"/>
</dbReference>
<dbReference type="GO" id="GO:0042802">
    <property type="term" value="F:identical protein binding"/>
    <property type="evidence" value="ECO:0000353"/>
    <property type="project" value="IntAct"/>
</dbReference>
<dbReference type="GO" id="GO:0005222">
    <property type="term" value="F:intracellularly cAMP-activated cation channel activity"/>
    <property type="evidence" value="ECO:0000314"/>
    <property type="project" value="WormBase"/>
</dbReference>
<dbReference type="GO" id="GO:0005223">
    <property type="term" value="F:intracellularly cGMP-activated cation channel activity"/>
    <property type="evidence" value="ECO:0000314"/>
    <property type="project" value="WormBase"/>
</dbReference>
<dbReference type="GO" id="GO:0044877">
    <property type="term" value="F:protein-containing complex binding"/>
    <property type="evidence" value="ECO:0000318"/>
    <property type="project" value="GO_Central"/>
</dbReference>
<dbReference type="GO" id="GO:0005249">
    <property type="term" value="F:voltage-gated potassium channel activity"/>
    <property type="evidence" value="ECO:0007669"/>
    <property type="project" value="InterPro"/>
</dbReference>
<dbReference type="GO" id="GO:0009454">
    <property type="term" value="P:aerotaxis"/>
    <property type="evidence" value="ECO:0000315"/>
    <property type="project" value="WormBase"/>
</dbReference>
<dbReference type="GO" id="GO:0019722">
    <property type="term" value="P:calcium-mediated signaling"/>
    <property type="evidence" value="ECO:0000315"/>
    <property type="project" value="UniProtKB"/>
</dbReference>
<dbReference type="GO" id="GO:0007635">
    <property type="term" value="P:chemosensory behavior"/>
    <property type="evidence" value="ECO:0000315"/>
    <property type="project" value="UniProtKB"/>
</dbReference>
<dbReference type="GO" id="GO:0006935">
    <property type="term" value="P:chemotaxis"/>
    <property type="evidence" value="ECO:0000315"/>
    <property type="project" value="CACAO"/>
</dbReference>
<dbReference type="GO" id="GO:0003031">
    <property type="term" value="P:detection of carbon dioxide"/>
    <property type="evidence" value="ECO:0000315"/>
    <property type="project" value="UniProtKB"/>
</dbReference>
<dbReference type="GO" id="GO:0050907">
    <property type="term" value="P:detection of chemical stimulus involved in sensory perception"/>
    <property type="evidence" value="ECO:0000315"/>
    <property type="project" value="UniProtKB"/>
</dbReference>
<dbReference type="GO" id="GO:0007199">
    <property type="term" value="P:G protein-coupled receptor signaling pathway coupled to cGMP nucleotide second messenger"/>
    <property type="evidence" value="ECO:0000315"/>
    <property type="project" value="UniProtKB"/>
</dbReference>
<dbReference type="GO" id="GO:0098655">
    <property type="term" value="P:monoatomic cation transmembrane transport"/>
    <property type="evidence" value="ECO:0000314"/>
    <property type="project" value="WormBase"/>
</dbReference>
<dbReference type="GO" id="GO:0048609">
    <property type="term" value="P:multicellular organismal reproductive process"/>
    <property type="evidence" value="ECO:0000316"/>
    <property type="project" value="WormBase"/>
</dbReference>
<dbReference type="GO" id="GO:0010754">
    <property type="term" value="P:negative regulation of cGMP-mediated signaling"/>
    <property type="evidence" value="ECO:0000315"/>
    <property type="project" value="WormBase"/>
</dbReference>
<dbReference type="GO" id="GO:0048812">
    <property type="term" value="P:neuron projection morphogenesis"/>
    <property type="evidence" value="ECO:0000315"/>
    <property type="project" value="WormBase"/>
</dbReference>
<dbReference type="GO" id="GO:0042048">
    <property type="term" value="P:olfactory behavior"/>
    <property type="evidence" value="ECO:0000315"/>
    <property type="project" value="WormBase"/>
</dbReference>
<dbReference type="GO" id="GO:0007602">
    <property type="term" value="P:phototransduction"/>
    <property type="evidence" value="ECO:0000315"/>
    <property type="project" value="UniProtKB"/>
</dbReference>
<dbReference type="GO" id="GO:0010628">
    <property type="term" value="P:positive regulation of gene expression"/>
    <property type="evidence" value="ECO:0000315"/>
    <property type="project" value="UniProtKB"/>
</dbReference>
<dbReference type="GO" id="GO:0040010">
    <property type="term" value="P:positive regulation of growth rate"/>
    <property type="evidence" value="ECO:0000316"/>
    <property type="project" value="WormBase"/>
</dbReference>
<dbReference type="GO" id="GO:0045944">
    <property type="term" value="P:positive regulation of transcription by RNA polymerase II"/>
    <property type="evidence" value="ECO:0000315"/>
    <property type="project" value="WormBase"/>
</dbReference>
<dbReference type="GO" id="GO:0030516">
    <property type="term" value="P:regulation of axon extension"/>
    <property type="evidence" value="ECO:0000315"/>
    <property type="project" value="WormBase"/>
</dbReference>
<dbReference type="GO" id="GO:0045664">
    <property type="term" value="P:regulation of neuron differentiation"/>
    <property type="evidence" value="ECO:0000315"/>
    <property type="project" value="WormBase"/>
</dbReference>
<dbReference type="GO" id="GO:0055093">
    <property type="term" value="P:response to hyperoxia"/>
    <property type="evidence" value="ECO:0000315"/>
    <property type="project" value="WormBase"/>
</dbReference>
<dbReference type="GO" id="GO:0070482">
    <property type="term" value="P:response to oxygen levels"/>
    <property type="evidence" value="ECO:0000315"/>
    <property type="project" value="WormBase"/>
</dbReference>
<dbReference type="GO" id="GO:0040040">
    <property type="term" value="P:thermosensory behavior"/>
    <property type="evidence" value="ECO:0000315"/>
    <property type="project" value="UniProtKB"/>
</dbReference>
<dbReference type="GO" id="GO:0043052">
    <property type="term" value="P:thermotaxis"/>
    <property type="evidence" value="ECO:0000315"/>
    <property type="project" value="UniProtKB"/>
</dbReference>
<dbReference type="CDD" id="cd00038">
    <property type="entry name" value="CAP_ED"/>
    <property type="match status" value="1"/>
</dbReference>
<dbReference type="DisProt" id="DP02989"/>
<dbReference type="FunFam" id="2.60.120.10:FF:000002">
    <property type="entry name" value="Cyclic nucleotide gated channel alpha 1a"/>
    <property type="match status" value="1"/>
</dbReference>
<dbReference type="FunFam" id="1.10.287.70:FF:000367">
    <property type="entry name" value="Cyclic nucleotide-gated cation channel"/>
    <property type="match status" value="1"/>
</dbReference>
<dbReference type="FunFam" id="1.10.287.630:FF:000001">
    <property type="entry name" value="Cyclic nucleotide-gated channel alpha 3"/>
    <property type="match status" value="1"/>
</dbReference>
<dbReference type="Gene3D" id="1.10.287.70">
    <property type="match status" value="1"/>
</dbReference>
<dbReference type="Gene3D" id="1.20.5.300">
    <property type="match status" value="1"/>
</dbReference>
<dbReference type="Gene3D" id="1.10.287.630">
    <property type="entry name" value="Helix hairpin bin"/>
    <property type="match status" value="1"/>
</dbReference>
<dbReference type="Gene3D" id="2.60.120.10">
    <property type="entry name" value="Jelly Rolls"/>
    <property type="match status" value="1"/>
</dbReference>
<dbReference type="InterPro" id="IPR032406">
    <property type="entry name" value="CLZ_dom"/>
</dbReference>
<dbReference type="InterPro" id="IPR050866">
    <property type="entry name" value="CNG_cation_channel"/>
</dbReference>
<dbReference type="InterPro" id="IPR018488">
    <property type="entry name" value="cNMP-bd_CS"/>
</dbReference>
<dbReference type="InterPro" id="IPR000595">
    <property type="entry name" value="cNMP-bd_dom"/>
</dbReference>
<dbReference type="InterPro" id="IPR018490">
    <property type="entry name" value="cNMP-bd_dom_sf"/>
</dbReference>
<dbReference type="InterPro" id="IPR005821">
    <property type="entry name" value="Ion_trans_dom"/>
</dbReference>
<dbReference type="InterPro" id="IPR003938">
    <property type="entry name" value="K_chnl_volt-dep_EAG/ELK/ERG"/>
</dbReference>
<dbReference type="InterPro" id="IPR014710">
    <property type="entry name" value="RmlC-like_jellyroll"/>
</dbReference>
<dbReference type="PANTHER" id="PTHR45638">
    <property type="entry name" value="CYCLIC NUCLEOTIDE-GATED CATION CHANNEL SUBUNIT A"/>
    <property type="match status" value="1"/>
</dbReference>
<dbReference type="PANTHER" id="PTHR45638:SF11">
    <property type="entry name" value="CYCLIC NUCLEOTIDE-GATED CATION CHANNEL SUBUNIT A"/>
    <property type="match status" value="1"/>
</dbReference>
<dbReference type="Pfam" id="PF16526">
    <property type="entry name" value="CLZ"/>
    <property type="match status" value="1"/>
</dbReference>
<dbReference type="Pfam" id="PF00027">
    <property type="entry name" value="cNMP_binding"/>
    <property type="match status" value="1"/>
</dbReference>
<dbReference type="Pfam" id="PF00520">
    <property type="entry name" value="Ion_trans"/>
    <property type="match status" value="1"/>
</dbReference>
<dbReference type="PRINTS" id="PR01463">
    <property type="entry name" value="EAGCHANLFMLY"/>
</dbReference>
<dbReference type="SMART" id="SM00100">
    <property type="entry name" value="cNMP"/>
    <property type="match status" value="1"/>
</dbReference>
<dbReference type="SUPFAM" id="SSF51206">
    <property type="entry name" value="cAMP-binding domain-like"/>
    <property type="match status" value="1"/>
</dbReference>
<dbReference type="SUPFAM" id="SSF81324">
    <property type="entry name" value="Voltage-gated potassium channels"/>
    <property type="match status" value="1"/>
</dbReference>
<dbReference type="PROSITE" id="PS00888">
    <property type="entry name" value="CNMP_BINDING_1"/>
    <property type="match status" value="1"/>
</dbReference>
<dbReference type="PROSITE" id="PS00889">
    <property type="entry name" value="CNMP_BINDING_2"/>
    <property type="match status" value="1"/>
</dbReference>
<dbReference type="PROSITE" id="PS50042">
    <property type="entry name" value="CNMP_BINDING_3"/>
    <property type="match status" value="1"/>
</dbReference>
<accession>Q03611</accession>
<accession>P90800</accession>
<gene>
    <name type="primary">tax-4</name>
    <name type="ORF">ZC84.2</name>
</gene>
<protein>
    <recommendedName>
        <fullName evidence="17">Cyclic nucleotide-gated channel</fullName>
    </recommendedName>
    <alternativeName>
        <fullName>Abnormal chemotaxis protein 4</fullName>
    </alternativeName>
</protein>
<feature type="chain" id="PRO_0000219328" description="Cyclic nucleotide-gated channel">
    <location>
        <begin position="1"/>
        <end position="733"/>
    </location>
</feature>
<feature type="topological domain" description="Cytoplasmic" evidence="17">
    <location>
        <begin position="1"/>
        <end position="125"/>
    </location>
</feature>
<feature type="transmembrane region" description="Helical; Name=S1" evidence="13 23">
    <location>
        <begin position="126"/>
        <end position="148"/>
    </location>
</feature>
<feature type="topological domain" description="Extracellular" evidence="17">
    <location>
        <begin position="149"/>
        <end position="197"/>
    </location>
</feature>
<feature type="transmembrane region" description="Helical; Name=S2" evidence="13 23">
    <location>
        <begin position="198"/>
        <end position="217"/>
    </location>
</feature>
<feature type="topological domain" description="Cytoplasmic" evidence="17">
    <location>
        <begin position="218"/>
        <end position="251"/>
    </location>
</feature>
<feature type="transmembrane region" description="Helical; Name=S3" evidence="13 23">
    <location>
        <begin position="252"/>
        <end position="265"/>
    </location>
</feature>
<feature type="topological domain" description="Extracellular" evidence="17">
    <location>
        <begin position="266"/>
        <end position="276"/>
    </location>
</feature>
<feature type="transmembrane region" description="Helical; Name=S4" evidence="13 23">
    <location>
        <begin position="277"/>
        <end position="287"/>
    </location>
</feature>
<feature type="topological domain" description="Cytoplasmic" evidence="17">
    <location>
        <begin position="288"/>
        <end position="308"/>
    </location>
</feature>
<feature type="transmembrane region" description="Helical; Name=S5" evidence="13 23">
    <location>
        <begin position="309"/>
        <end position="331"/>
    </location>
</feature>
<feature type="topological domain" description="Extracellular" evidence="17">
    <location>
        <begin position="332"/>
        <end position="362"/>
    </location>
</feature>
<feature type="transmembrane region" description="Helical; Name=P-helix" evidence="13 23">
    <location>
        <begin position="363"/>
        <end position="385"/>
    </location>
</feature>
<feature type="transmembrane region" description="Helical; Name=S6" evidence="13 23">
    <location>
        <begin position="386"/>
        <end position="411"/>
    </location>
</feature>
<feature type="topological domain" description="Cytoplasmic" evidence="17">
    <location>
        <begin position="412"/>
        <end position="733"/>
    </location>
</feature>
<feature type="region of interest" description="Disordered" evidence="4">
    <location>
        <begin position="1"/>
        <end position="33"/>
    </location>
</feature>
<feature type="region of interest" description="Disordered" evidence="4">
    <location>
        <begin position="67"/>
        <end position="95"/>
    </location>
</feature>
<feature type="region of interest" description="Selectivity filter" evidence="18">
    <location>
        <begin position="376"/>
        <end position="379"/>
    </location>
</feature>
<feature type="region of interest" description="C-linker" evidence="18">
    <location>
        <begin position="419"/>
        <end position="496"/>
    </location>
</feature>
<feature type="region of interest" description="Cyclic nucleotide-binding domain" evidence="10 13 14">
    <location>
        <begin position="493"/>
        <end position="607"/>
    </location>
</feature>
<feature type="region of interest" description="Disordered" evidence="4">
    <location>
        <begin position="694"/>
        <end position="733"/>
    </location>
</feature>
<feature type="compositionally biased region" description="Polar residues" evidence="4">
    <location>
        <begin position="12"/>
        <end position="25"/>
    </location>
</feature>
<feature type="binding site" evidence="10 13 14">
    <location>
        <position position="379"/>
    </location>
    <ligand>
        <name>Na(+)</name>
        <dbReference type="ChEBI" id="CHEBI:29101"/>
    </ligand>
</feature>
<feature type="binding site" evidence="13 14">
    <location>
        <position position="559"/>
    </location>
    <ligand>
        <name>3',5'-cyclic GMP</name>
        <dbReference type="ChEBI" id="CHEBI:57746"/>
    </ligand>
</feature>
<feature type="binding site" evidence="3">
    <location>
        <position position="560"/>
    </location>
    <ligand>
        <name>3',5'-cyclic AMP</name>
        <dbReference type="ChEBI" id="CHEBI:58165"/>
    </ligand>
</feature>
<feature type="binding site" evidence="10 13 14">
    <location>
        <position position="562"/>
    </location>
    <ligand>
        <name>3',5'-cyclic GMP</name>
        <dbReference type="ChEBI" id="CHEBI:57746"/>
    </ligand>
</feature>
<feature type="binding site" evidence="3">
    <location>
        <position position="575"/>
    </location>
    <ligand>
        <name>3',5'-cyclic AMP</name>
        <dbReference type="ChEBI" id="CHEBI:58165"/>
    </ligand>
</feature>
<feature type="binding site" evidence="10 13 14">
    <location>
        <position position="575"/>
    </location>
    <ligand>
        <name>3',5'-cyclic GMP</name>
        <dbReference type="ChEBI" id="CHEBI:57746"/>
    </ligand>
</feature>
<feature type="binding site" evidence="10 13 14">
    <location>
        <position position="576"/>
    </location>
    <ligand>
        <name>3',5'-cyclic GMP</name>
        <dbReference type="ChEBI" id="CHEBI:57746"/>
    </ligand>
</feature>
<feature type="binding site" evidence="10">
    <location>
        <position position="619"/>
    </location>
    <ligand>
        <name>3',5'-cyclic GMP</name>
        <dbReference type="ChEBI" id="CHEBI:57746"/>
    </ligand>
</feature>
<feature type="binding site" evidence="14">
    <location>
        <position position="620"/>
    </location>
    <ligand>
        <name>3',5'-cyclic GMP</name>
        <dbReference type="ChEBI" id="CHEBI:57746"/>
    </ligand>
</feature>
<feature type="site" description="Central gate" evidence="19">
    <location>
        <position position="403"/>
    </location>
</feature>
<feature type="site" description="Central gate" evidence="19">
    <location>
        <position position="407"/>
    </location>
</feature>
<feature type="mutagenesis site" description="In p678; defects in the avoidance of P.aeruginosa and of nitric oxide. In nu629; abolishes the calcium flux to the cytoplasm in the ASJ sensory neurons in response to the addition and removal of a nitric oxide stimulus." evidence="11">
    <location>
        <begin position="82"/>
        <end position="733"/>
    </location>
</feature>
<feature type="mutagenesis site" description="Impairs activation by cGMP, likely by disrupting the central gate." evidence="13">
    <original>F</original>
    <variation>A</variation>
    <location>
        <position position="403"/>
    </location>
</feature>
<feature type="mutagenesis site" description="Impairs activation by cGMP, likely by disrupting the central gate; when associated with A-407." evidence="13">
    <original>F</original>
    <variation>V</variation>
    <location>
        <position position="403"/>
    </location>
</feature>
<feature type="mutagenesis site" description="Impairs activation by cGMP, likely by disrupting the central gate. Impairs activation by cGMP, likely by disrupting the central gate; when associated with V-403." evidence="13">
    <original>V</original>
    <variation>A</variation>
    <location>
        <position position="407"/>
    </location>
</feature>
<feature type="mutagenesis site" description="Fails to produce currents in the presence of 100 uM intracellular cGMP." evidence="10">
    <original>M</original>
    <variation>MG</variation>
    <location>
        <position position="417"/>
    </location>
</feature>
<feature type="mutagenesis site" description="Fails to produce currents in the presence of 100 uM intracellular cGMP." evidence="10">
    <original>M</original>
    <variation>MGG</variation>
    <location>
        <position position="417"/>
    </location>
</feature>
<feature type="mutagenesis site" description="Fails to produce currents in the presence of 100 uM intracellular cGMP." evidence="10">
    <original>M</original>
    <variation>MGGG</variation>
    <location>
        <position position="417"/>
    </location>
</feature>
<feature type="mutagenesis site" description="Fails to produce currents in the presence of 100 uM intracellular cGMP; when associated with A-425; A-429; A-432 and A-453." evidence="10">
    <original>R</original>
    <variation>A</variation>
    <location>
        <position position="421"/>
    </location>
</feature>
<feature type="mutagenesis site" description="Cytotoxic; traps the protein in its active open state even in the absence of cGMP activation." evidence="14">
    <original>R</original>
    <variation>W</variation>
    <location>
        <position position="421"/>
    </location>
</feature>
<feature type="mutagenesis site" description="Fails to produce currents in the presence of 100 uM intracellular cGMP; when associated with A-421; A-429; A-432 and A-453." evidence="10">
    <original>Q</original>
    <variation>A</variation>
    <location>
        <position position="425"/>
    </location>
</feature>
<feature type="mutagenesis site" description="Fails to produce currents in the presence of 100 uM intracellular cGMP; when associated with A-421; A-425; A-432 and A-453." evidence="10">
    <original>D</original>
    <variation>A</variation>
    <location>
        <position position="429"/>
    </location>
</feature>
<feature type="mutagenesis site" description="Fails to produce currents in the presence of 100 uM intracellular cGMP; when associated with A-421; A-425; A-429 and A-453." evidence="10">
    <original>K</original>
    <variation>A</variation>
    <location>
        <position position="432"/>
    </location>
</feature>
<feature type="mutagenesis site" description="Fails to produce currents in the presence of 100 uM intracellular cGMP; when associated with A-421; A-425; A-429 and A-432." evidence="10">
    <original>D</original>
    <variation>A</variation>
    <location>
        <position position="453"/>
    </location>
</feature>
<feature type="mutagenesis site" description="In ky791; reduces expression of the G protein-coupled receptor (GPCR) srsx-3 in the AWC neuron." evidence="5">
    <location>
        <begin position="510"/>
        <end position="733"/>
    </location>
</feature>
<feature type="helix" evidence="29">
    <location>
        <begin position="105"/>
        <end position="111"/>
    </location>
</feature>
<feature type="strand" evidence="27">
    <location>
        <begin position="116"/>
        <end position="118"/>
    </location>
</feature>
<feature type="helix" evidence="29">
    <location>
        <begin position="119"/>
        <end position="144"/>
    </location>
</feature>
<feature type="helix" evidence="29">
    <location>
        <begin position="146"/>
        <end position="149"/>
    </location>
</feature>
<feature type="strand" evidence="29">
    <location>
        <begin position="152"/>
        <end position="160"/>
    </location>
</feature>
<feature type="turn" evidence="30">
    <location>
        <begin position="162"/>
        <end position="164"/>
    </location>
</feature>
<feature type="strand" evidence="29">
    <location>
        <begin position="167"/>
        <end position="171"/>
    </location>
</feature>
<feature type="turn" evidence="29">
    <location>
        <begin position="174"/>
        <end position="177"/>
    </location>
</feature>
<feature type="strand" evidence="29">
    <location>
        <begin position="185"/>
        <end position="188"/>
    </location>
</feature>
<feature type="strand" evidence="29">
    <location>
        <begin position="190"/>
        <end position="193"/>
    </location>
</feature>
<feature type="helix" evidence="29">
    <location>
        <begin position="194"/>
        <end position="223"/>
    </location>
</feature>
<feature type="strand" evidence="28">
    <location>
        <begin position="227"/>
        <end position="234"/>
    </location>
</feature>
<feature type="helix" evidence="29">
    <location>
        <begin position="237"/>
        <end position="246"/>
    </location>
</feature>
<feature type="helix" evidence="29">
    <location>
        <begin position="249"/>
        <end position="255"/>
    </location>
</feature>
<feature type="helix" evidence="29">
    <location>
        <begin position="260"/>
        <end position="264"/>
    </location>
</feature>
<feature type="turn" evidence="29">
    <location>
        <begin position="269"/>
        <end position="272"/>
    </location>
</feature>
<feature type="helix" evidence="29">
    <location>
        <begin position="277"/>
        <end position="285"/>
    </location>
</feature>
<feature type="helix" evidence="29">
    <location>
        <begin position="287"/>
        <end position="299"/>
    </location>
</feature>
<feature type="helix" evidence="29">
    <location>
        <begin position="304"/>
        <end position="334"/>
    </location>
</feature>
<feature type="strand" evidence="29">
    <location>
        <begin position="338"/>
        <end position="346"/>
    </location>
</feature>
<feature type="turn" evidence="29">
    <location>
        <begin position="348"/>
        <end position="350"/>
    </location>
</feature>
<feature type="helix" evidence="29">
    <location>
        <begin position="359"/>
        <end position="374"/>
    </location>
</feature>
<feature type="helix" evidence="29">
    <location>
        <begin position="386"/>
        <end position="416"/>
    </location>
</feature>
<feature type="helix" evidence="29">
    <location>
        <begin position="419"/>
        <end position="437"/>
    </location>
</feature>
<feature type="helix" evidence="29">
    <location>
        <begin position="442"/>
        <end position="456"/>
    </location>
</feature>
<feature type="turn" evidence="29">
    <location>
        <begin position="457"/>
        <end position="459"/>
    </location>
</feature>
<feature type="helix" evidence="29">
    <location>
        <begin position="465"/>
        <end position="470"/>
    </location>
</feature>
<feature type="helix" evidence="29">
    <location>
        <begin position="473"/>
        <end position="488"/>
    </location>
</feature>
<feature type="strand" evidence="29">
    <location>
        <begin position="491"/>
        <end position="494"/>
    </location>
</feature>
<feature type="helix" evidence="29">
    <location>
        <begin position="499"/>
        <end position="507"/>
    </location>
</feature>
<feature type="strand" evidence="29">
    <location>
        <begin position="510"/>
        <end position="514"/>
    </location>
</feature>
<feature type="strand" evidence="29">
    <location>
        <begin position="519"/>
        <end position="521"/>
    </location>
</feature>
<feature type="strand" evidence="29">
    <location>
        <begin position="531"/>
        <end position="536"/>
    </location>
</feature>
<feature type="strand" evidence="29">
    <location>
        <begin position="538"/>
        <end position="540"/>
    </location>
</feature>
<feature type="strand" evidence="29">
    <location>
        <begin position="543"/>
        <end position="546"/>
    </location>
</feature>
<feature type="strand" evidence="28">
    <location>
        <begin position="550"/>
        <end position="552"/>
    </location>
</feature>
<feature type="strand" evidence="28">
    <location>
        <begin position="557"/>
        <end position="559"/>
    </location>
</feature>
<feature type="helix" evidence="28">
    <location>
        <begin position="560"/>
        <end position="563"/>
    </location>
</feature>
<feature type="strand" evidence="29">
    <location>
        <begin position="570"/>
        <end position="574"/>
    </location>
</feature>
<feature type="strand" evidence="29">
    <location>
        <begin position="579"/>
        <end position="589"/>
    </location>
</feature>
<feature type="helix" evidence="29">
    <location>
        <begin position="592"/>
        <end position="599"/>
    </location>
</feature>
<feature type="helix" evidence="29">
    <location>
        <begin position="603"/>
        <end position="618"/>
    </location>
</feature>
<proteinExistence type="evidence at protein level"/>
<organism>
    <name type="scientific">Caenorhabditis elegans</name>
    <dbReference type="NCBI Taxonomy" id="6239"/>
    <lineage>
        <taxon>Eukaryota</taxon>
        <taxon>Metazoa</taxon>
        <taxon>Ecdysozoa</taxon>
        <taxon>Nematoda</taxon>
        <taxon>Chromadorea</taxon>
        <taxon>Rhabditida</taxon>
        <taxon>Rhabditina</taxon>
        <taxon>Rhabditomorpha</taxon>
        <taxon>Rhabditoidea</taxon>
        <taxon>Rhabditidae</taxon>
        <taxon>Peloderinae</taxon>
        <taxon>Caenorhabditis</taxon>
    </lineage>
</organism>